<gene>
    <name type="ORF">CPIJ019086</name>
</gene>
<reference key="1">
    <citation type="submission" date="2007-03" db="EMBL/GenBank/DDBJ databases">
        <title>Annotation of Culex pipiens quinquefasciatus.</title>
        <authorList>
            <consortium name="The Broad Institute Genome Sequencing Platform"/>
            <person name="Atkinson P.W."/>
            <person name="Hemingway J."/>
            <person name="Christensen B.M."/>
            <person name="Higgs S."/>
            <person name="Kodira C.D."/>
            <person name="Hannick L.I."/>
            <person name="Megy K."/>
            <person name="O'Leary S.B."/>
            <person name="Pearson M."/>
            <person name="Haas B.J."/>
            <person name="Mauceli E."/>
            <person name="Wortman J.R."/>
            <person name="Lee N.H."/>
            <person name="Guigo R."/>
            <person name="Stanke M."/>
            <person name="Alvarado L."/>
            <person name="Amedeo P."/>
            <person name="Antoine C.H."/>
            <person name="Arensburger P."/>
            <person name="Bidwell S.L."/>
            <person name="Crawford M."/>
            <person name="Camaro F."/>
            <person name="Devon K."/>
            <person name="Engels R."/>
            <person name="Hammond M."/>
            <person name="Howarth C."/>
            <person name="Koehrsen M."/>
            <person name="Lawson D."/>
            <person name="Montgomery P."/>
            <person name="Nene V."/>
            <person name="Nusbaum C."/>
            <person name="Puiu D."/>
            <person name="Romero-Severson J."/>
            <person name="Severson D.W."/>
            <person name="Shumway M."/>
            <person name="Sisk P."/>
            <person name="Stolte C."/>
            <person name="Zeng Q."/>
            <person name="Eisenstadt E."/>
            <person name="Fraser-Liggett C.M."/>
            <person name="Strausberg R."/>
            <person name="Galagan J."/>
            <person name="Birren B."/>
            <person name="Collins F.H."/>
        </authorList>
    </citation>
    <scope>NUCLEOTIDE SEQUENCE [LARGE SCALE GENOMIC DNA]</scope>
    <source>
        <strain>JHB</strain>
    </source>
</reference>
<dbReference type="EC" id="6.3.5.-" evidence="1"/>
<dbReference type="EMBL" id="DS233223">
    <property type="protein sequence ID" value="EDS28814.1"/>
    <property type="molecule type" value="Genomic_DNA"/>
</dbReference>
<dbReference type="RefSeq" id="XP_001869240.1">
    <property type="nucleotide sequence ID" value="XM_001869205.1"/>
</dbReference>
<dbReference type="SMR" id="B0XHW8"/>
<dbReference type="FunCoup" id="B0XHW8">
    <property type="interactions" value="1123"/>
</dbReference>
<dbReference type="STRING" id="7176.B0XHW8"/>
<dbReference type="EnsemblMetazoa" id="CPIJ019086-RA">
    <property type="protein sequence ID" value="CPIJ019086-PA"/>
    <property type="gene ID" value="CPIJ019086"/>
</dbReference>
<dbReference type="KEGG" id="cqu:CpipJ_CPIJ019086"/>
<dbReference type="VEuPathDB" id="VectorBase:CPIJ019086"/>
<dbReference type="VEuPathDB" id="VectorBase:CQUJHB007471"/>
<dbReference type="eggNOG" id="KOG4247">
    <property type="taxonomic scope" value="Eukaryota"/>
</dbReference>
<dbReference type="HOGENOM" id="CLU_105899_0_1_1"/>
<dbReference type="InParanoid" id="B0XHW8"/>
<dbReference type="OMA" id="RCAKRTD"/>
<dbReference type="OrthoDB" id="5394539at2759"/>
<dbReference type="PhylomeDB" id="B0XHW8"/>
<dbReference type="Proteomes" id="UP000002320">
    <property type="component" value="Unassembled WGS sequence"/>
</dbReference>
<dbReference type="GO" id="GO:0030956">
    <property type="term" value="C:glutamyl-tRNA(Gln) amidotransferase complex"/>
    <property type="evidence" value="ECO:0007669"/>
    <property type="project" value="UniProtKB-UniRule"/>
</dbReference>
<dbReference type="GO" id="GO:0005739">
    <property type="term" value="C:mitochondrion"/>
    <property type="evidence" value="ECO:0007669"/>
    <property type="project" value="UniProtKB-SubCell"/>
</dbReference>
<dbReference type="GO" id="GO:0005524">
    <property type="term" value="F:ATP binding"/>
    <property type="evidence" value="ECO:0007669"/>
    <property type="project" value="UniProtKB-KW"/>
</dbReference>
<dbReference type="GO" id="GO:0050567">
    <property type="term" value="F:glutaminyl-tRNA synthase (glutamine-hydrolyzing) activity"/>
    <property type="evidence" value="ECO:0007669"/>
    <property type="project" value="UniProtKB-UniRule"/>
</dbReference>
<dbReference type="GO" id="GO:0070681">
    <property type="term" value="P:glutaminyl-tRNAGln biosynthesis via transamidation"/>
    <property type="evidence" value="ECO:0007669"/>
    <property type="project" value="UniProtKB-UniRule"/>
</dbReference>
<dbReference type="GO" id="GO:0032543">
    <property type="term" value="P:mitochondrial translation"/>
    <property type="evidence" value="ECO:0007669"/>
    <property type="project" value="UniProtKB-UniRule"/>
</dbReference>
<dbReference type="GO" id="GO:0006450">
    <property type="term" value="P:regulation of translational fidelity"/>
    <property type="evidence" value="ECO:0007669"/>
    <property type="project" value="InterPro"/>
</dbReference>
<dbReference type="HAMAP" id="MF_00122">
    <property type="entry name" value="GatC"/>
    <property type="match status" value="1"/>
</dbReference>
<dbReference type="InterPro" id="IPR036113">
    <property type="entry name" value="Asp/Glu-ADT_sf_sub_c"/>
</dbReference>
<dbReference type="InterPro" id="IPR003837">
    <property type="entry name" value="GatC"/>
</dbReference>
<dbReference type="NCBIfam" id="TIGR00135">
    <property type="entry name" value="gatC"/>
    <property type="match status" value="1"/>
</dbReference>
<dbReference type="PANTHER" id="PTHR15004">
    <property type="entry name" value="GLUTAMYL-TRNA(GLN) AMIDOTRANSFERASE SUBUNIT C, MITOCHONDRIAL"/>
    <property type="match status" value="1"/>
</dbReference>
<dbReference type="PANTHER" id="PTHR15004:SF0">
    <property type="entry name" value="GLUTAMYL-TRNA(GLN) AMIDOTRANSFERASE SUBUNIT C, MITOCHONDRIAL"/>
    <property type="match status" value="1"/>
</dbReference>
<dbReference type="Pfam" id="PF02686">
    <property type="entry name" value="GatC"/>
    <property type="match status" value="1"/>
</dbReference>
<dbReference type="SUPFAM" id="SSF141000">
    <property type="entry name" value="Glu-tRNAGln amidotransferase C subunit"/>
    <property type="match status" value="1"/>
</dbReference>
<feature type="transit peptide" description="Mitochondrion" evidence="1">
    <location>
        <begin position="1"/>
        <end position="23"/>
    </location>
</feature>
<feature type="chain" id="PRO_0000413297" description="Glutamyl-tRNA(Gln) amidotransferase subunit C-1, mitochondrial">
    <location>
        <begin position="24"/>
        <end position="173"/>
    </location>
</feature>
<feature type="region of interest" description="Disordered" evidence="2">
    <location>
        <begin position="51"/>
        <end position="70"/>
    </location>
</feature>
<feature type="compositionally biased region" description="Polar residues" evidence="2">
    <location>
        <begin position="61"/>
        <end position="70"/>
    </location>
</feature>
<organism>
    <name type="scientific">Culex quinquefasciatus</name>
    <name type="common">Southern house mosquito</name>
    <name type="synonym">Culex pungens</name>
    <dbReference type="NCBI Taxonomy" id="7176"/>
    <lineage>
        <taxon>Eukaryota</taxon>
        <taxon>Metazoa</taxon>
        <taxon>Ecdysozoa</taxon>
        <taxon>Arthropoda</taxon>
        <taxon>Hexapoda</taxon>
        <taxon>Insecta</taxon>
        <taxon>Pterygota</taxon>
        <taxon>Neoptera</taxon>
        <taxon>Endopterygota</taxon>
        <taxon>Diptera</taxon>
        <taxon>Nematocera</taxon>
        <taxon>Culicoidea</taxon>
        <taxon>Culicidae</taxon>
        <taxon>Culicinae</taxon>
        <taxon>Culicini</taxon>
        <taxon>Culex</taxon>
        <taxon>Culex</taxon>
    </lineage>
</organism>
<comment type="function">
    <text evidence="1">Allows the formation of correctly charged Gln-tRNA(Gln) through the transamidation of misacylated Glu-tRNA(Gln) in the mitochondria. The reaction takes place in the presence of glutamine and ATP through an activated gamma-phospho-Glu-tRNA(Gln).</text>
</comment>
<comment type="catalytic activity">
    <reaction evidence="1">
        <text>L-glutamyl-tRNA(Gln) + L-glutamine + ATP + H2O = L-glutaminyl-tRNA(Gln) + L-glutamate + ADP + phosphate + H(+)</text>
        <dbReference type="Rhea" id="RHEA:17521"/>
        <dbReference type="Rhea" id="RHEA-COMP:9681"/>
        <dbReference type="Rhea" id="RHEA-COMP:9684"/>
        <dbReference type="ChEBI" id="CHEBI:15377"/>
        <dbReference type="ChEBI" id="CHEBI:15378"/>
        <dbReference type="ChEBI" id="CHEBI:29985"/>
        <dbReference type="ChEBI" id="CHEBI:30616"/>
        <dbReference type="ChEBI" id="CHEBI:43474"/>
        <dbReference type="ChEBI" id="CHEBI:58359"/>
        <dbReference type="ChEBI" id="CHEBI:78520"/>
        <dbReference type="ChEBI" id="CHEBI:78521"/>
        <dbReference type="ChEBI" id="CHEBI:456216"/>
    </reaction>
</comment>
<comment type="subunit">
    <text evidence="1">Subunit of the heterotrimeric GatCAB amidotransferase (AdT) complex, composed of A, B and C subunits.</text>
</comment>
<comment type="subcellular location">
    <subcellularLocation>
        <location evidence="1">Mitochondrion</location>
    </subcellularLocation>
</comment>
<comment type="similarity">
    <text evidence="1">Belongs to the GatC family.</text>
</comment>
<keyword id="KW-0067">ATP-binding</keyword>
<keyword id="KW-0436">Ligase</keyword>
<keyword id="KW-0496">Mitochondrion</keyword>
<keyword id="KW-0547">Nucleotide-binding</keyword>
<keyword id="KW-0648">Protein biosynthesis</keyword>
<keyword id="KW-1185">Reference proteome</keyword>
<keyword id="KW-0809">Transit peptide</keyword>
<evidence type="ECO:0000255" key="1">
    <source>
        <dbReference type="HAMAP-Rule" id="MF_03149"/>
    </source>
</evidence>
<evidence type="ECO:0000256" key="2">
    <source>
        <dbReference type="SAM" id="MobiDB-lite"/>
    </source>
</evidence>
<proteinExistence type="inferred from homology"/>
<name>GATC1_CULQU</name>
<sequence>MIRIPFRLRPPPGRTLHSLVRTFASTKPADLTGTQEKNTRQKINFHELKHPSKVPQRPHKSTTTVGQSTPTRIPVDAQTVQLLERLSLVDLDSAEAHRTLEDAIEFASQILSVDTEGVEPLYTVLERERLTLREDRVTDGNIQQDVLRNARVTEEEYFVAPPGNIPLEQEPRK</sequence>
<protein>
    <recommendedName>
        <fullName>Glutamyl-tRNA(Gln) amidotransferase subunit C-1, mitochondrial</fullName>
        <shortName evidence="1">Glu-AdT subunit C-1</shortName>
        <ecNumber evidence="1">6.3.5.-</ecNumber>
    </recommendedName>
</protein>
<accession>B0XHW8</accession>